<comment type="function">
    <text>Not known; does not seem to be involved in host cell lysis.</text>
</comment>
<comment type="similarity">
    <text evidence="1">To B.subtilis YqxG/YqdC.</text>
</comment>
<proteinExistence type="evidence at protein level"/>
<name>XEPA_BACSU</name>
<accession>P39797</accession>
<dbReference type="EMBL" id="L25924">
    <property type="protein sequence ID" value="AAA22642.1"/>
    <property type="molecule type" value="Genomic_DNA"/>
</dbReference>
<dbReference type="EMBL" id="Z70177">
    <property type="protein sequence ID" value="CAA94046.1"/>
    <property type="molecule type" value="Genomic_DNA"/>
</dbReference>
<dbReference type="EMBL" id="Z36941">
    <property type="protein sequence ID" value="CAA85400.1"/>
    <property type="molecule type" value="Genomic_DNA"/>
</dbReference>
<dbReference type="EMBL" id="AL009126">
    <property type="protein sequence ID" value="CAB13135.2"/>
    <property type="molecule type" value="Genomic_DNA"/>
</dbReference>
<dbReference type="PIR" id="H69733">
    <property type="entry name" value="H69733"/>
</dbReference>
<dbReference type="PIR" id="S65589">
    <property type="entry name" value="S65589"/>
</dbReference>
<dbReference type="RefSeq" id="NP_389161.2">
    <property type="nucleotide sequence ID" value="NC_000964.3"/>
</dbReference>
<dbReference type="RefSeq" id="WP_003245597.1">
    <property type="nucleotide sequence ID" value="NZ_OZ025638.1"/>
</dbReference>
<dbReference type="PDB" id="6I56">
    <property type="method" value="X-ray"/>
    <property type="resolution" value="2.12 A"/>
    <property type="chains" value="A/B/C/D/E=1-279"/>
</dbReference>
<dbReference type="PDB" id="6IA5">
    <property type="method" value="X-ray"/>
    <property type="resolution" value="1.88 A"/>
    <property type="chains" value="A/B/C/D/E=1-279"/>
</dbReference>
<dbReference type="PDBsum" id="6I56"/>
<dbReference type="PDBsum" id="6IA5"/>
<dbReference type="SMR" id="P39797"/>
<dbReference type="FunCoup" id="P39797">
    <property type="interactions" value="42"/>
</dbReference>
<dbReference type="STRING" id="224308.BSU12780"/>
<dbReference type="PaxDb" id="224308-BSU12780"/>
<dbReference type="EnsemblBacteria" id="CAB13135">
    <property type="protein sequence ID" value="CAB13135"/>
    <property type="gene ID" value="BSU_12780"/>
</dbReference>
<dbReference type="GeneID" id="938161"/>
<dbReference type="KEGG" id="bsu:BSU12780"/>
<dbReference type="PATRIC" id="fig|224308.179.peg.1386"/>
<dbReference type="eggNOG" id="ENOG5030EJ0">
    <property type="taxonomic scope" value="Bacteria"/>
</dbReference>
<dbReference type="InParanoid" id="P39797"/>
<dbReference type="OrthoDB" id="2910251at2"/>
<dbReference type="BioCyc" id="BSUB:BSU12780-MONOMER"/>
<dbReference type="Proteomes" id="UP000001570">
    <property type="component" value="Chromosome"/>
</dbReference>
<protein>
    <recommendedName>
        <fullName>Phage-like element PBSX protein XepA</fullName>
    </recommendedName>
    <alternativeName>
        <fullName>Protein XkdY</fullName>
    </alternativeName>
</protein>
<organism>
    <name type="scientific">Bacillus subtilis (strain 168)</name>
    <dbReference type="NCBI Taxonomy" id="224308"/>
    <lineage>
        <taxon>Bacteria</taxon>
        <taxon>Bacillati</taxon>
        <taxon>Bacillota</taxon>
        <taxon>Bacilli</taxon>
        <taxon>Bacillales</taxon>
        <taxon>Bacillaceae</taxon>
        <taxon>Bacillus</taxon>
    </lineage>
</organism>
<feature type="chain" id="PRO_0000066005" description="Phage-like element PBSX protein XepA">
    <location>
        <begin position="1"/>
        <end position="279"/>
    </location>
</feature>
<feature type="sequence conflict" description="In Ref. 2; CAA94046." evidence="1" ref="2">
    <original>GA</original>
    <variation>PP</variation>
    <location>
        <begin position="17"/>
        <end position="18"/>
    </location>
</feature>
<feature type="strand" evidence="2">
    <location>
        <begin position="20"/>
        <end position="23"/>
    </location>
</feature>
<feature type="strand" evidence="2">
    <location>
        <begin position="28"/>
        <end position="35"/>
    </location>
</feature>
<feature type="helix" evidence="2">
    <location>
        <begin position="36"/>
        <end position="38"/>
    </location>
</feature>
<feature type="strand" evidence="2">
    <location>
        <begin position="41"/>
        <end position="44"/>
    </location>
</feature>
<feature type="strand" evidence="2">
    <location>
        <begin position="53"/>
        <end position="55"/>
    </location>
</feature>
<feature type="strand" evidence="2">
    <location>
        <begin position="63"/>
        <end position="65"/>
    </location>
</feature>
<feature type="strand" evidence="2">
    <location>
        <begin position="69"/>
        <end position="78"/>
    </location>
</feature>
<feature type="strand" evidence="2">
    <location>
        <begin position="80"/>
        <end position="92"/>
    </location>
</feature>
<feature type="strand" evidence="2">
    <location>
        <begin position="94"/>
        <end position="101"/>
    </location>
</feature>
<feature type="strand" evidence="2">
    <location>
        <begin position="116"/>
        <end position="125"/>
    </location>
</feature>
<feature type="strand" evidence="2">
    <location>
        <begin position="133"/>
        <end position="140"/>
    </location>
</feature>
<feature type="strand" evidence="2">
    <location>
        <begin position="144"/>
        <end position="148"/>
    </location>
</feature>
<feature type="strand" evidence="2">
    <location>
        <begin position="150"/>
        <end position="152"/>
    </location>
</feature>
<feature type="strand" evidence="2">
    <location>
        <begin position="154"/>
        <end position="158"/>
    </location>
</feature>
<feature type="helix" evidence="2">
    <location>
        <begin position="160"/>
        <end position="162"/>
    </location>
</feature>
<feature type="strand" evidence="2">
    <location>
        <begin position="167"/>
        <end position="171"/>
    </location>
</feature>
<feature type="strand" evidence="2">
    <location>
        <begin position="175"/>
        <end position="184"/>
    </location>
</feature>
<feature type="strand" evidence="2">
    <location>
        <begin position="200"/>
        <end position="208"/>
    </location>
</feature>
<feature type="strand" evidence="2">
    <location>
        <begin position="210"/>
        <end position="219"/>
    </location>
</feature>
<feature type="strand" evidence="2">
    <location>
        <begin position="225"/>
        <end position="227"/>
    </location>
</feature>
<feature type="strand" evidence="2">
    <location>
        <begin position="230"/>
        <end position="232"/>
    </location>
</feature>
<feature type="turn" evidence="2">
    <location>
        <begin position="233"/>
        <end position="235"/>
    </location>
</feature>
<feature type="strand" evidence="2">
    <location>
        <begin position="238"/>
        <end position="243"/>
    </location>
</feature>
<feature type="strand" evidence="2">
    <location>
        <begin position="246"/>
        <end position="252"/>
    </location>
</feature>
<feature type="strand" evidence="2">
    <location>
        <begin position="257"/>
        <end position="269"/>
    </location>
</feature>
<feature type="strand" evidence="2">
    <location>
        <begin position="271"/>
        <end position="278"/>
    </location>
</feature>
<gene>
    <name type="primary">xepA</name>
    <name type="synonym">xkdY</name>
    <name type="ordered locus">BSU12780</name>
</gene>
<evidence type="ECO:0000305" key="1"/>
<evidence type="ECO:0007829" key="2">
    <source>
        <dbReference type="PDB" id="6IA5"/>
    </source>
</evidence>
<keyword id="KW-0002">3D-structure</keyword>
<keyword id="KW-1185">Reference proteome</keyword>
<reference key="1">
    <citation type="journal article" date="1994" name="Microbiology">
        <title>Lytic enzymes associated with defective prophages of Bacillus subtilis: sequencing and characterization of the region comprising the N-acetylmuramoyl-L-alanine amidase gene of prophage PBSX.</title>
        <authorList>
            <person name="Longchamp P.F."/>
            <person name="Mauel C."/>
            <person name="Karamata D."/>
        </authorList>
    </citation>
    <scope>NUCLEOTIDE SEQUENCE [GENOMIC DNA]</scope>
    <source>
        <strain>168</strain>
    </source>
</reference>
<reference key="2">
    <citation type="journal article" date="1996" name="Microbiology">
        <title>The phage-like element PBSX and part of the skin element, which are resident at different locations on the Bacillus subtilis chromosome, are highly homologous.</title>
        <authorList>
            <person name="Krogh S."/>
            <person name="O'Reilly M."/>
            <person name="Nolan N."/>
            <person name="Devine K.M."/>
        </authorList>
    </citation>
    <scope>NUCLEOTIDE SEQUENCE [GENOMIC DNA]</scope>
    <source>
        <strain>168 / SO113</strain>
    </source>
</reference>
<reference key="3">
    <citation type="journal article" date="1998" name="J. Bacteriol.">
        <title>Lysis genes of the Bacillus subtilis defective prophage PBSX.</title>
        <authorList>
            <person name="Krogh S."/>
            <person name="Jorgensen S.T."/>
            <person name="Devine K.M."/>
        </authorList>
    </citation>
    <scope>NUCLEOTIDE SEQUENCE [GENOMIC DNA]</scope>
    <source>
        <strain>168</strain>
    </source>
</reference>
<reference key="4">
    <citation type="journal article" date="1997" name="Nature">
        <title>The complete genome sequence of the Gram-positive bacterium Bacillus subtilis.</title>
        <authorList>
            <person name="Kunst F."/>
            <person name="Ogasawara N."/>
            <person name="Moszer I."/>
            <person name="Albertini A.M."/>
            <person name="Alloni G."/>
            <person name="Azevedo V."/>
            <person name="Bertero M.G."/>
            <person name="Bessieres P."/>
            <person name="Bolotin A."/>
            <person name="Borchert S."/>
            <person name="Borriss R."/>
            <person name="Boursier L."/>
            <person name="Brans A."/>
            <person name="Braun M."/>
            <person name="Brignell S.C."/>
            <person name="Bron S."/>
            <person name="Brouillet S."/>
            <person name="Bruschi C.V."/>
            <person name="Caldwell B."/>
            <person name="Capuano V."/>
            <person name="Carter N.M."/>
            <person name="Choi S.-K."/>
            <person name="Codani J.-J."/>
            <person name="Connerton I.F."/>
            <person name="Cummings N.J."/>
            <person name="Daniel R.A."/>
            <person name="Denizot F."/>
            <person name="Devine K.M."/>
            <person name="Duesterhoeft A."/>
            <person name="Ehrlich S.D."/>
            <person name="Emmerson P.T."/>
            <person name="Entian K.-D."/>
            <person name="Errington J."/>
            <person name="Fabret C."/>
            <person name="Ferrari E."/>
            <person name="Foulger D."/>
            <person name="Fritz C."/>
            <person name="Fujita M."/>
            <person name="Fujita Y."/>
            <person name="Fuma S."/>
            <person name="Galizzi A."/>
            <person name="Galleron N."/>
            <person name="Ghim S.-Y."/>
            <person name="Glaser P."/>
            <person name="Goffeau A."/>
            <person name="Golightly E.J."/>
            <person name="Grandi G."/>
            <person name="Guiseppi G."/>
            <person name="Guy B.J."/>
            <person name="Haga K."/>
            <person name="Haiech J."/>
            <person name="Harwood C.R."/>
            <person name="Henaut A."/>
            <person name="Hilbert H."/>
            <person name="Holsappel S."/>
            <person name="Hosono S."/>
            <person name="Hullo M.-F."/>
            <person name="Itaya M."/>
            <person name="Jones L.-M."/>
            <person name="Joris B."/>
            <person name="Karamata D."/>
            <person name="Kasahara Y."/>
            <person name="Klaerr-Blanchard M."/>
            <person name="Klein C."/>
            <person name="Kobayashi Y."/>
            <person name="Koetter P."/>
            <person name="Koningstein G."/>
            <person name="Krogh S."/>
            <person name="Kumano M."/>
            <person name="Kurita K."/>
            <person name="Lapidus A."/>
            <person name="Lardinois S."/>
            <person name="Lauber J."/>
            <person name="Lazarevic V."/>
            <person name="Lee S.-M."/>
            <person name="Levine A."/>
            <person name="Liu H."/>
            <person name="Masuda S."/>
            <person name="Mauel C."/>
            <person name="Medigue C."/>
            <person name="Medina N."/>
            <person name="Mellado R.P."/>
            <person name="Mizuno M."/>
            <person name="Moestl D."/>
            <person name="Nakai S."/>
            <person name="Noback M."/>
            <person name="Noone D."/>
            <person name="O'Reilly M."/>
            <person name="Ogawa K."/>
            <person name="Ogiwara A."/>
            <person name="Oudega B."/>
            <person name="Park S.-H."/>
            <person name="Parro V."/>
            <person name="Pohl T.M."/>
            <person name="Portetelle D."/>
            <person name="Porwollik S."/>
            <person name="Prescott A.M."/>
            <person name="Presecan E."/>
            <person name="Pujic P."/>
            <person name="Purnelle B."/>
            <person name="Rapoport G."/>
            <person name="Rey M."/>
            <person name="Reynolds S."/>
            <person name="Rieger M."/>
            <person name="Rivolta C."/>
            <person name="Rocha E."/>
            <person name="Roche B."/>
            <person name="Rose M."/>
            <person name="Sadaie Y."/>
            <person name="Sato T."/>
            <person name="Scanlan E."/>
            <person name="Schleich S."/>
            <person name="Schroeter R."/>
            <person name="Scoffone F."/>
            <person name="Sekiguchi J."/>
            <person name="Sekowska A."/>
            <person name="Seror S.J."/>
            <person name="Serror P."/>
            <person name="Shin B.-S."/>
            <person name="Soldo B."/>
            <person name="Sorokin A."/>
            <person name="Tacconi E."/>
            <person name="Takagi T."/>
            <person name="Takahashi H."/>
            <person name="Takemaru K."/>
            <person name="Takeuchi M."/>
            <person name="Tamakoshi A."/>
            <person name="Tanaka T."/>
            <person name="Terpstra P."/>
            <person name="Tognoni A."/>
            <person name="Tosato V."/>
            <person name="Uchiyama S."/>
            <person name="Vandenbol M."/>
            <person name="Vannier F."/>
            <person name="Vassarotti A."/>
            <person name="Viari A."/>
            <person name="Wambutt R."/>
            <person name="Wedler E."/>
            <person name="Wedler H."/>
            <person name="Weitzenegger T."/>
            <person name="Winters P."/>
            <person name="Wipat A."/>
            <person name="Yamamoto H."/>
            <person name="Yamane K."/>
            <person name="Yasumoto K."/>
            <person name="Yata K."/>
            <person name="Yoshida K."/>
            <person name="Yoshikawa H.-F."/>
            <person name="Zumstein E."/>
            <person name="Yoshikawa H."/>
            <person name="Danchin A."/>
        </authorList>
    </citation>
    <scope>NUCLEOTIDE SEQUENCE [LARGE SCALE GENOMIC DNA]</scope>
    <source>
        <strain>168</strain>
    </source>
</reference>
<reference key="5">
    <citation type="journal article" date="2009" name="Microbiology">
        <title>From a consortium sequence to a unified sequence: the Bacillus subtilis 168 reference genome a decade later.</title>
        <authorList>
            <person name="Barbe V."/>
            <person name="Cruveiller S."/>
            <person name="Kunst F."/>
            <person name="Lenoble P."/>
            <person name="Meurice G."/>
            <person name="Sekowska A."/>
            <person name="Vallenet D."/>
            <person name="Wang T."/>
            <person name="Moszer I."/>
            <person name="Medigue C."/>
            <person name="Danchin A."/>
        </authorList>
    </citation>
    <scope>SEQUENCE REVISION TO 17-18</scope>
</reference>
<sequence>MVKYQYEFPLDKAGKAGAVKPYRGGKNDFVTPVSNLSGVAEILTNAALKATEAYSQLGQDRLGAVLISKVKGWAYADREGTLFIEESDNNNVWTTTAAVNVAAGVLTATDWVYLSKRYYRFRYVNGNLQQSEFVLYQSVGAGEMDVRVNEKTPLQIDFAENQTHDGRLKVEARKTFDFVFHENAESASEGAALPVDGAAHLLVEVYGTAEMSEVKFWGKSVSGQKLPIRGVKTDDATTASSTLGKAEAWAFDIKGFKEIIMEIISITGGTLSVKGTAVS</sequence>